<accession>B0BCE1</accession>
<name>RUVC_CHLTB</name>
<keyword id="KW-0963">Cytoplasm</keyword>
<keyword id="KW-0227">DNA damage</keyword>
<keyword id="KW-0233">DNA recombination</keyword>
<keyword id="KW-0234">DNA repair</keyword>
<keyword id="KW-0238">DNA-binding</keyword>
<keyword id="KW-0255">Endonuclease</keyword>
<keyword id="KW-0378">Hydrolase</keyword>
<keyword id="KW-0460">Magnesium</keyword>
<keyword id="KW-0479">Metal-binding</keyword>
<keyword id="KW-0540">Nuclease</keyword>
<comment type="function">
    <text evidence="1">The RuvA-RuvB-RuvC complex processes Holliday junction (HJ) DNA during genetic recombination and DNA repair. Endonuclease that resolves HJ intermediates. Cleaves cruciform DNA by making single-stranded nicks across the HJ at symmetrical positions within the homologous arms, yielding a 5'-phosphate and a 3'-hydroxyl group; requires a central core of homology in the junction. The consensus cleavage sequence is 5'-(A/T)TT(C/G)-3'. Cleavage occurs on the 3'-side of the TT dinucleotide at the point of strand exchange. HJ branch migration catalyzed by RuvA-RuvB allows RuvC to scan DNA until it finds its consensus sequence, where it cleaves and resolves the cruciform DNA.</text>
</comment>
<comment type="catalytic activity">
    <reaction evidence="1">
        <text>Endonucleolytic cleavage at a junction such as a reciprocal single-stranded crossover between two homologous DNA duplexes (Holliday junction).</text>
        <dbReference type="EC" id="3.1.21.10"/>
    </reaction>
</comment>
<comment type="cofactor">
    <cofactor evidence="1">
        <name>Mg(2+)</name>
        <dbReference type="ChEBI" id="CHEBI:18420"/>
    </cofactor>
    <text evidence="1">Binds 2 Mg(2+) ion per subunit.</text>
</comment>
<comment type="subunit">
    <text evidence="1">Homodimer which binds Holliday junction (HJ) DNA. The HJ becomes 2-fold symmetrical on binding to RuvC with unstacked arms; it has a different conformation from HJ DNA in complex with RuvA. In the full resolvosome a probable DNA-RuvA(4)-RuvB(12)-RuvC(2) complex forms which resolves the HJ.</text>
</comment>
<comment type="subcellular location">
    <subcellularLocation>
        <location evidence="1">Cytoplasm</location>
    </subcellularLocation>
</comment>
<comment type="similarity">
    <text evidence="1">Belongs to the RuvC family.</text>
</comment>
<protein>
    <recommendedName>
        <fullName evidence="1">Crossover junction endodeoxyribonuclease RuvC</fullName>
        <ecNumber evidence="1">3.1.21.10</ecNumber>
    </recommendedName>
    <alternativeName>
        <fullName evidence="1">Holliday junction nuclease RuvC</fullName>
    </alternativeName>
    <alternativeName>
        <fullName evidence="1">Holliday junction resolvase RuvC</fullName>
    </alternativeName>
</protein>
<gene>
    <name evidence="1" type="primary">ruvC</name>
    <name type="ordered locus">CTLon_0759</name>
</gene>
<dbReference type="EC" id="3.1.21.10" evidence="1"/>
<dbReference type="EMBL" id="AM884177">
    <property type="protein sequence ID" value="CAP07156.1"/>
    <property type="molecule type" value="Genomic_DNA"/>
</dbReference>
<dbReference type="RefSeq" id="WP_009871866.1">
    <property type="nucleotide sequence ID" value="NC_010280.2"/>
</dbReference>
<dbReference type="SMR" id="B0BCE1"/>
<dbReference type="KEGG" id="ctl:CTLon_0759"/>
<dbReference type="HOGENOM" id="CLU_091257_3_0_0"/>
<dbReference type="Proteomes" id="UP001154401">
    <property type="component" value="Chromosome"/>
</dbReference>
<dbReference type="GO" id="GO:0005737">
    <property type="term" value="C:cytoplasm"/>
    <property type="evidence" value="ECO:0007669"/>
    <property type="project" value="UniProtKB-SubCell"/>
</dbReference>
<dbReference type="GO" id="GO:0048476">
    <property type="term" value="C:Holliday junction resolvase complex"/>
    <property type="evidence" value="ECO:0007669"/>
    <property type="project" value="UniProtKB-UniRule"/>
</dbReference>
<dbReference type="GO" id="GO:0008821">
    <property type="term" value="F:crossover junction DNA endonuclease activity"/>
    <property type="evidence" value="ECO:0007669"/>
    <property type="project" value="UniProtKB-UniRule"/>
</dbReference>
<dbReference type="GO" id="GO:0003677">
    <property type="term" value="F:DNA binding"/>
    <property type="evidence" value="ECO:0007669"/>
    <property type="project" value="UniProtKB-KW"/>
</dbReference>
<dbReference type="GO" id="GO:0000287">
    <property type="term" value="F:magnesium ion binding"/>
    <property type="evidence" value="ECO:0007669"/>
    <property type="project" value="UniProtKB-UniRule"/>
</dbReference>
<dbReference type="GO" id="GO:0006310">
    <property type="term" value="P:DNA recombination"/>
    <property type="evidence" value="ECO:0007669"/>
    <property type="project" value="UniProtKB-UniRule"/>
</dbReference>
<dbReference type="GO" id="GO:0006281">
    <property type="term" value="P:DNA repair"/>
    <property type="evidence" value="ECO:0007669"/>
    <property type="project" value="UniProtKB-UniRule"/>
</dbReference>
<dbReference type="CDD" id="cd16962">
    <property type="entry name" value="RuvC"/>
    <property type="match status" value="1"/>
</dbReference>
<dbReference type="FunFam" id="3.30.420.10:FF:000002">
    <property type="entry name" value="Crossover junction endodeoxyribonuclease RuvC"/>
    <property type="match status" value="1"/>
</dbReference>
<dbReference type="Gene3D" id="3.30.420.10">
    <property type="entry name" value="Ribonuclease H-like superfamily/Ribonuclease H"/>
    <property type="match status" value="1"/>
</dbReference>
<dbReference type="HAMAP" id="MF_00034">
    <property type="entry name" value="RuvC"/>
    <property type="match status" value="1"/>
</dbReference>
<dbReference type="InterPro" id="IPR012337">
    <property type="entry name" value="RNaseH-like_sf"/>
</dbReference>
<dbReference type="InterPro" id="IPR036397">
    <property type="entry name" value="RNaseH_sf"/>
</dbReference>
<dbReference type="InterPro" id="IPR020563">
    <property type="entry name" value="X-over_junc_endoDNase_Mg_BS"/>
</dbReference>
<dbReference type="InterPro" id="IPR002176">
    <property type="entry name" value="X-over_junc_endoDNase_RuvC"/>
</dbReference>
<dbReference type="NCBIfam" id="TIGR00228">
    <property type="entry name" value="ruvC"/>
    <property type="match status" value="1"/>
</dbReference>
<dbReference type="PANTHER" id="PTHR30194">
    <property type="entry name" value="CROSSOVER JUNCTION ENDODEOXYRIBONUCLEASE RUVC"/>
    <property type="match status" value="1"/>
</dbReference>
<dbReference type="PANTHER" id="PTHR30194:SF3">
    <property type="entry name" value="CROSSOVER JUNCTION ENDODEOXYRIBONUCLEASE RUVC"/>
    <property type="match status" value="1"/>
</dbReference>
<dbReference type="Pfam" id="PF02075">
    <property type="entry name" value="RuvC"/>
    <property type="match status" value="1"/>
</dbReference>
<dbReference type="PRINTS" id="PR00696">
    <property type="entry name" value="RSOLVASERUVC"/>
</dbReference>
<dbReference type="SUPFAM" id="SSF53098">
    <property type="entry name" value="Ribonuclease H-like"/>
    <property type="match status" value="1"/>
</dbReference>
<dbReference type="PROSITE" id="PS01321">
    <property type="entry name" value="RUVC"/>
    <property type="match status" value="1"/>
</dbReference>
<evidence type="ECO:0000255" key="1">
    <source>
        <dbReference type="HAMAP-Rule" id="MF_00034"/>
    </source>
</evidence>
<organism>
    <name type="scientific">Chlamydia trachomatis serovar L2b (strain UCH-1/proctitis)</name>
    <dbReference type="NCBI Taxonomy" id="471473"/>
    <lineage>
        <taxon>Bacteria</taxon>
        <taxon>Pseudomonadati</taxon>
        <taxon>Chlamydiota</taxon>
        <taxon>Chlamydiia</taxon>
        <taxon>Chlamydiales</taxon>
        <taxon>Chlamydiaceae</taxon>
        <taxon>Chlamydia/Chlamydophila group</taxon>
        <taxon>Chlamydia</taxon>
    </lineage>
</organism>
<sequence>MADLIMGIDPGTLVCGYALIKVENRYHIHPHSFGKVKLSQKLALAHRYKQLFTEISTILQQESPKAVVLETQYVHKNPQSTIKLGMARGVLLLAASLQDVPVFEYAPNTAKKAAVGKGNASKKQVQLMVSKLLRVPDLLAEDNEDIADAFALAMCHAHLAPYQDLKKTLV</sequence>
<proteinExistence type="inferred from homology"/>
<reference key="1">
    <citation type="journal article" date="2008" name="Genome Res.">
        <title>Chlamydia trachomatis: genome sequence analysis of lymphogranuloma venereum isolates.</title>
        <authorList>
            <person name="Thomson N.R."/>
            <person name="Holden M.T.G."/>
            <person name="Carder C."/>
            <person name="Lennard N."/>
            <person name="Lockey S.J."/>
            <person name="Marsh P."/>
            <person name="Skipp P."/>
            <person name="O'Connor C.D."/>
            <person name="Goodhead I."/>
            <person name="Norbertzcak H."/>
            <person name="Harris B."/>
            <person name="Ormond D."/>
            <person name="Rance R."/>
            <person name="Quail M.A."/>
            <person name="Parkhill J."/>
            <person name="Stephens R.S."/>
            <person name="Clarke I.N."/>
        </authorList>
    </citation>
    <scope>NUCLEOTIDE SEQUENCE [LARGE SCALE GENOMIC DNA]</scope>
    <source>
        <strain>UCH-1/proctitis</strain>
    </source>
</reference>
<feature type="chain" id="PRO_1000090516" description="Crossover junction endodeoxyribonuclease RuvC">
    <location>
        <begin position="1"/>
        <end position="170"/>
    </location>
</feature>
<feature type="active site" evidence="1">
    <location>
        <position position="9"/>
    </location>
</feature>
<feature type="active site" evidence="1">
    <location>
        <position position="70"/>
    </location>
</feature>
<feature type="active site" evidence="1">
    <location>
        <position position="145"/>
    </location>
</feature>
<feature type="binding site" evidence="1">
    <location>
        <position position="9"/>
    </location>
    <ligand>
        <name>Mg(2+)</name>
        <dbReference type="ChEBI" id="CHEBI:18420"/>
        <label>1</label>
    </ligand>
</feature>
<feature type="binding site" evidence="1">
    <location>
        <position position="70"/>
    </location>
    <ligand>
        <name>Mg(2+)</name>
        <dbReference type="ChEBI" id="CHEBI:18420"/>
        <label>2</label>
    </ligand>
</feature>
<feature type="binding site" evidence="1">
    <location>
        <position position="145"/>
    </location>
    <ligand>
        <name>Mg(2+)</name>
        <dbReference type="ChEBI" id="CHEBI:18420"/>
        <label>1</label>
    </ligand>
</feature>